<dbReference type="EC" id="3.1.5.1" evidence="1"/>
<dbReference type="EMBL" id="CP001164">
    <property type="protein sequence ID" value="ACI35442.1"/>
    <property type="molecule type" value="Genomic_DNA"/>
</dbReference>
<dbReference type="RefSeq" id="WP_000057080.1">
    <property type="nucleotide sequence ID" value="NC_011353.1"/>
</dbReference>
<dbReference type="SMR" id="B5Z0E0"/>
<dbReference type="KEGG" id="ecf:ECH74115_0170"/>
<dbReference type="HOGENOM" id="CLU_028163_2_1_6"/>
<dbReference type="GO" id="GO:0008832">
    <property type="term" value="F:dGTPase activity"/>
    <property type="evidence" value="ECO:0007669"/>
    <property type="project" value="UniProtKB-UniRule"/>
</dbReference>
<dbReference type="GO" id="GO:0000287">
    <property type="term" value="F:magnesium ion binding"/>
    <property type="evidence" value="ECO:0007669"/>
    <property type="project" value="UniProtKB-UniRule"/>
</dbReference>
<dbReference type="GO" id="GO:0006203">
    <property type="term" value="P:dGTP catabolic process"/>
    <property type="evidence" value="ECO:0007669"/>
    <property type="project" value="InterPro"/>
</dbReference>
<dbReference type="CDD" id="cd00077">
    <property type="entry name" value="HDc"/>
    <property type="match status" value="1"/>
</dbReference>
<dbReference type="FunFam" id="1.10.3210.10:FF:000009">
    <property type="entry name" value="Deoxyguanosinetriphosphate triphosphohydrolase"/>
    <property type="match status" value="1"/>
</dbReference>
<dbReference type="FunFam" id="1.10.3210.10:FF:000010">
    <property type="entry name" value="Deoxyguanosinetriphosphate triphosphohydrolase"/>
    <property type="match status" value="1"/>
</dbReference>
<dbReference type="FunFam" id="1.10.3410.10:FF:000001">
    <property type="entry name" value="Deoxyguanosinetriphosphate triphosphohydrolase"/>
    <property type="match status" value="1"/>
</dbReference>
<dbReference type="Gene3D" id="1.10.3210.10">
    <property type="entry name" value="Hypothetical protein af1432"/>
    <property type="match status" value="2"/>
</dbReference>
<dbReference type="Gene3D" id="1.10.3410.10">
    <property type="entry name" value="putative deoxyguanosinetriphosphate triphosphohydrolase like domain"/>
    <property type="match status" value="1"/>
</dbReference>
<dbReference type="HAMAP" id="MF_00030">
    <property type="entry name" value="dGTPase_type1"/>
    <property type="match status" value="1"/>
</dbReference>
<dbReference type="InterPro" id="IPR023293">
    <property type="entry name" value="dGTP_triP_hydro_central_sf"/>
</dbReference>
<dbReference type="InterPro" id="IPR006261">
    <property type="entry name" value="dGTPase"/>
</dbReference>
<dbReference type="InterPro" id="IPR050135">
    <property type="entry name" value="dGTPase-like"/>
</dbReference>
<dbReference type="InterPro" id="IPR020779">
    <property type="entry name" value="dNTPase_1"/>
</dbReference>
<dbReference type="InterPro" id="IPR003607">
    <property type="entry name" value="HD/PDEase_dom"/>
</dbReference>
<dbReference type="InterPro" id="IPR006674">
    <property type="entry name" value="HD_domain"/>
</dbReference>
<dbReference type="NCBIfam" id="TIGR01353">
    <property type="entry name" value="dGTP_triPase"/>
    <property type="match status" value="1"/>
</dbReference>
<dbReference type="NCBIfam" id="NF003429">
    <property type="entry name" value="PRK04926.1"/>
    <property type="match status" value="1"/>
</dbReference>
<dbReference type="PANTHER" id="PTHR11373:SF32">
    <property type="entry name" value="DEOXYGUANOSINETRIPHOSPHATE TRIPHOSPHOHYDROLASE"/>
    <property type="match status" value="1"/>
</dbReference>
<dbReference type="PANTHER" id="PTHR11373">
    <property type="entry name" value="DEOXYNUCLEOSIDE TRIPHOSPHATE TRIPHOSPHOHYDROLASE"/>
    <property type="match status" value="1"/>
</dbReference>
<dbReference type="Pfam" id="PF01966">
    <property type="entry name" value="HD"/>
    <property type="match status" value="1"/>
</dbReference>
<dbReference type="SMART" id="SM00471">
    <property type="entry name" value="HDc"/>
    <property type="match status" value="1"/>
</dbReference>
<dbReference type="SUPFAM" id="SSF109604">
    <property type="entry name" value="HD-domain/PDEase-like"/>
    <property type="match status" value="1"/>
</dbReference>
<dbReference type="PROSITE" id="PS51831">
    <property type="entry name" value="HD"/>
    <property type="match status" value="1"/>
</dbReference>
<sequence>MAQIDFRKKINWHRRYRSPQGVKTEHEILRIFESDRGRIINSPAIRRLQQKTQVFPLERNAAVRTRLTHSMEVQQVGRYIAKEILSRLKELKLLEAYGLDELTGPFESIVEMSCLMHDIGNPPFGHFGEAAINDWFRQRLHPEDAESQPLTDDRCSVAVLRLRDGEEPLNELRRKIRQDLCHFEGNAQGIRLVHTLMRMNLTWAQVGGILKYTRPAWWRGETPETHHYLMKKPGYYLSEEAYIARLRKELNLALYSRFPLTWIMEAADDISYCVADLEDAVEKRIFTVEQLYHHLHEAWGQHEKGSLFSLVVENAWEKSRSNSLSRSTEDQFFMYLRVNTLNKLVPYAAQRFIDNLPAIFAGTFNHALLEDASECSDLLKLYKNVAVKHVFSHPDVEQLELQGYRVISGLLEIYRPLLSLSLSDFTELVEKERVKRSPIESRLFHKLSTRHRLAYVEAVSKLPSDSPEFPLWEYYYRCRLLQDYISGMTDLYAWDEYRRLMAVEQ</sequence>
<gene>
    <name evidence="1" type="primary">dgt</name>
    <name type="ordered locus">ECH74115_0170</name>
</gene>
<proteinExistence type="inferred from homology"/>
<feature type="chain" id="PRO_1000090259" description="Deoxyguanosinetriphosphate triphosphohydrolase">
    <location>
        <begin position="1"/>
        <end position="505"/>
    </location>
</feature>
<feature type="domain" description="HD" evidence="2">
    <location>
        <begin position="66"/>
        <end position="273"/>
    </location>
</feature>
<protein>
    <recommendedName>
        <fullName evidence="1">Deoxyguanosinetriphosphate triphosphohydrolase</fullName>
        <shortName evidence="1">dGTP triphosphohydrolase</shortName>
        <shortName evidence="1">dGTPase</shortName>
        <ecNumber evidence="1">3.1.5.1</ecNumber>
    </recommendedName>
</protein>
<name>DGTP_ECO5E</name>
<organism>
    <name type="scientific">Escherichia coli O157:H7 (strain EC4115 / EHEC)</name>
    <dbReference type="NCBI Taxonomy" id="444450"/>
    <lineage>
        <taxon>Bacteria</taxon>
        <taxon>Pseudomonadati</taxon>
        <taxon>Pseudomonadota</taxon>
        <taxon>Gammaproteobacteria</taxon>
        <taxon>Enterobacterales</taxon>
        <taxon>Enterobacteriaceae</taxon>
        <taxon>Escherichia</taxon>
    </lineage>
</organism>
<accession>B5Z0E0</accession>
<comment type="function">
    <text evidence="1">dGTPase preferentially hydrolyzes dGTP over the other canonical NTPs.</text>
</comment>
<comment type="catalytic activity">
    <reaction evidence="1">
        <text>dGTP + H2O = 2'-deoxyguanosine + triphosphate + H(+)</text>
        <dbReference type="Rhea" id="RHEA:15193"/>
        <dbReference type="ChEBI" id="CHEBI:15377"/>
        <dbReference type="ChEBI" id="CHEBI:15378"/>
        <dbReference type="ChEBI" id="CHEBI:17172"/>
        <dbReference type="ChEBI" id="CHEBI:18036"/>
        <dbReference type="ChEBI" id="CHEBI:61429"/>
        <dbReference type="EC" id="3.1.5.1"/>
    </reaction>
</comment>
<comment type="cofactor">
    <cofactor evidence="1">
        <name>Mg(2+)</name>
        <dbReference type="ChEBI" id="CHEBI:18420"/>
    </cofactor>
</comment>
<comment type="subunit">
    <text evidence="1">Homotetramer.</text>
</comment>
<comment type="similarity">
    <text evidence="1">Belongs to the dGTPase family. Type 1 subfamily.</text>
</comment>
<evidence type="ECO:0000255" key="1">
    <source>
        <dbReference type="HAMAP-Rule" id="MF_00030"/>
    </source>
</evidence>
<evidence type="ECO:0000255" key="2">
    <source>
        <dbReference type="PROSITE-ProRule" id="PRU01175"/>
    </source>
</evidence>
<reference key="1">
    <citation type="journal article" date="2011" name="Proc. Natl. Acad. Sci. U.S.A.">
        <title>Genomic anatomy of Escherichia coli O157:H7 outbreaks.</title>
        <authorList>
            <person name="Eppinger M."/>
            <person name="Mammel M.K."/>
            <person name="Leclerc J.E."/>
            <person name="Ravel J."/>
            <person name="Cebula T.A."/>
        </authorList>
    </citation>
    <scope>NUCLEOTIDE SEQUENCE [LARGE SCALE GENOMIC DNA]</scope>
    <source>
        <strain>EC4115 / EHEC</strain>
    </source>
</reference>
<keyword id="KW-0378">Hydrolase</keyword>
<keyword id="KW-0460">Magnesium</keyword>